<proteinExistence type="inferred from homology"/>
<protein>
    <recommendedName>
        <fullName evidence="1">Indole-3-glycerol phosphate synthase</fullName>
        <shortName evidence="1">IGPS</shortName>
        <ecNumber evidence="1">4.1.1.48</ecNumber>
    </recommendedName>
</protein>
<evidence type="ECO:0000255" key="1">
    <source>
        <dbReference type="HAMAP-Rule" id="MF_00134"/>
    </source>
</evidence>
<name>TRPC_BURO1</name>
<feature type="chain" id="PRO_1000018451" description="Indole-3-glycerol phosphate synthase">
    <location>
        <begin position="1"/>
        <end position="261"/>
    </location>
</feature>
<sequence>MSDILDRIIAVKREEIAAALRSTPLEALKLEASARDLRDFVGALRAKHAAGNAAVIAEIKKASPSKGVLREHFVPADIARSYAAHGAACLSVLTDEQFFQGGVRYLEEARAACTLPVLRKDFIVDAYQIVEARAMGADAILLIAAALDTPLMQDLEAYAHSLGLAVLVEVHDRHEMEQALTLKTPLLGINNRNLRTFETSIQTTLDMLDMIPADRIVVTESGILSRTDVDTMRAANVNTFLVGEAFMRAEQPGEELARMFF</sequence>
<comment type="catalytic activity">
    <reaction evidence="1">
        <text>1-(2-carboxyphenylamino)-1-deoxy-D-ribulose 5-phosphate + H(+) = (1S,2R)-1-C-(indol-3-yl)glycerol 3-phosphate + CO2 + H2O</text>
        <dbReference type="Rhea" id="RHEA:23476"/>
        <dbReference type="ChEBI" id="CHEBI:15377"/>
        <dbReference type="ChEBI" id="CHEBI:15378"/>
        <dbReference type="ChEBI" id="CHEBI:16526"/>
        <dbReference type="ChEBI" id="CHEBI:58613"/>
        <dbReference type="ChEBI" id="CHEBI:58866"/>
        <dbReference type="EC" id="4.1.1.48"/>
    </reaction>
</comment>
<comment type="pathway">
    <text evidence="1">Amino-acid biosynthesis; L-tryptophan biosynthesis; L-tryptophan from chorismate: step 4/5.</text>
</comment>
<comment type="similarity">
    <text evidence="1">Belongs to the TrpC family.</text>
</comment>
<accession>Q1BSD2</accession>
<organism>
    <name type="scientific">Burkholderia orbicola (strain AU 1054)</name>
    <dbReference type="NCBI Taxonomy" id="331271"/>
    <lineage>
        <taxon>Bacteria</taxon>
        <taxon>Pseudomonadati</taxon>
        <taxon>Pseudomonadota</taxon>
        <taxon>Betaproteobacteria</taxon>
        <taxon>Burkholderiales</taxon>
        <taxon>Burkholderiaceae</taxon>
        <taxon>Burkholderia</taxon>
        <taxon>Burkholderia cepacia complex</taxon>
        <taxon>Burkholderia orbicola</taxon>
    </lineage>
</organism>
<keyword id="KW-0028">Amino-acid biosynthesis</keyword>
<keyword id="KW-0057">Aromatic amino acid biosynthesis</keyword>
<keyword id="KW-0210">Decarboxylase</keyword>
<keyword id="KW-0456">Lyase</keyword>
<keyword id="KW-0822">Tryptophan biosynthesis</keyword>
<dbReference type="EC" id="4.1.1.48" evidence="1"/>
<dbReference type="EMBL" id="CP000378">
    <property type="protein sequence ID" value="ABF77473.1"/>
    <property type="molecule type" value="Genomic_DNA"/>
</dbReference>
<dbReference type="SMR" id="Q1BSD2"/>
<dbReference type="HOGENOM" id="CLU_034247_2_0_4"/>
<dbReference type="UniPathway" id="UPA00035">
    <property type="reaction ID" value="UER00043"/>
</dbReference>
<dbReference type="GO" id="GO:0004425">
    <property type="term" value="F:indole-3-glycerol-phosphate synthase activity"/>
    <property type="evidence" value="ECO:0007669"/>
    <property type="project" value="UniProtKB-UniRule"/>
</dbReference>
<dbReference type="GO" id="GO:0004640">
    <property type="term" value="F:phosphoribosylanthranilate isomerase activity"/>
    <property type="evidence" value="ECO:0007669"/>
    <property type="project" value="TreeGrafter"/>
</dbReference>
<dbReference type="GO" id="GO:0000162">
    <property type="term" value="P:L-tryptophan biosynthetic process"/>
    <property type="evidence" value="ECO:0007669"/>
    <property type="project" value="UniProtKB-UniRule"/>
</dbReference>
<dbReference type="CDD" id="cd00331">
    <property type="entry name" value="IGPS"/>
    <property type="match status" value="1"/>
</dbReference>
<dbReference type="FunFam" id="3.20.20.70:FF:000024">
    <property type="entry name" value="Indole-3-glycerol phosphate synthase"/>
    <property type="match status" value="1"/>
</dbReference>
<dbReference type="Gene3D" id="3.20.20.70">
    <property type="entry name" value="Aldolase class I"/>
    <property type="match status" value="1"/>
</dbReference>
<dbReference type="HAMAP" id="MF_00134_B">
    <property type="entry name" value="IGPS_B"/>
    <property type="match status" value="1"/>
</dbReference>
<dbReference type="InterPro" id="IPR013785">
    <property type="entry name" value="Aldolase_TIM"/>
</dbReference>
<dbReference type="InterPro" id="IPR045186">
    <property type="entry name" value="Indole-3-glycerol_P_synth"/>
</dbReference>
<dbReference type="InterPro" id="IPR013798">
    <property type="entry name" value="Indole-3-glycerol_P_synth_dom"/>
</dbReference>
<dbReference type="InterPro" id="IPR001468">
    <property type="entry name" value="Indole-3-GlycerolPSynthase_CS"/>
</dbReference>
<dbReference type="InterPro" id="IPR011060">
    <property type="entry name" value="RibuloseP-bd_barrel"/>
</dbReference>
<dbReference type="NCBIfam" id="NF001373">
    <property type="entry name" value="PRK00278.1-6"/>
    <property type="match status" value="1"/>
</dbReference>
<dbReference type="NCBIfam" id="NF001377">
    <property type="entry name" value="PRK00278.2-4"/>
    <property type="match status" value="1"/>
</dbReference>
<dbReference type="PANTHER" id="PTHR22854:SF2">
    <property type="entry name" value="INDOLE-3-GLYCEROL-PHOSPHATE SYNTHASE"/>
    <property type="match status" value="1"/>
</dbReference>
<dbReference type="PANTHER" id="PTHR22854">
    <property type="entry name" value="TRYPTOPHAN BIOSYNTHESIS PROTEIN"/>
    <property type="match status" value="1"/>
</dbReference>
<dbReference type="Pfam" id="PF00218">
    <property type="entry name" value="IGPS"/>
    <property type="match status" value="1"/>
</dbReference>
<dbReference type="SUPFAM" id="SSF51366">
    <property type="entry name" value="Ribulose-phoshate binding barrel"/>
    <property type="match status" value="1"/>
</dbReference>
<dbReference type="PROSITE" id="PS00614">
    <property type="entry name" value="IGPS"/>
    <property type="match status" value="1"/>
</dbReference>
<reference key="1">
    <citation type="submission" date="2006-05" db="EMBL/GenBank/DDBJ databases">
        <title>Complete sequence of chromosome 1 of Burkholderia cenocepacia AU 1054.</title>
        <authorList>
            <consortium name="US DOE Joint Genome Institute"/>
            <person name="Copeland A."/>
            <person name="Lucas S."/>
            <person name="Lapidus A."/>
            <person name="Barry K."/>
            <person name="Detter J.C."/>
            <person name="Glavina del Rio T."/>
            <person name="Hammon N."/>
            <person name="Israni S."/>
            <person name="Dalin E."/>
            <person name="Tice H."/>
            <person name="Pitluck S."/>
            <person name="Chain P."/>
            <person name="Malfatti S."/>
            <person name="Shin M."/>
            <person name="Vergez L."/>
            <person name="Schmutz J."/>
            <person name="Larimer F."/>
            <person name="Land M."/>
            <person name="Hauser L."/>
            <person name="Kyrpides N."/>
            <person name="Lykidis A."/>
            <person name="LiPuma J.J."/>
            <person name="Konstantinidis K."/>
            <person name="Tiedje J.M."/>
            <person name="Richardson P."/>
        </authorList>
    </citation>
    <scope>NUCLEOTIDE SEQUENCE [LARGE SCALE GENOMIC DNA]</scope>
    <source>
        <strain>AU 1054</strain>
    </source>
</reference>
<gene>
    <name evidence="1" type="primary">trpC</name>
    <name type="ordered locus">Bcen_2574</name>
</gene>